<accession>A4QBS4</accession>
<name>RS9_CORGB</name>
<reference key="1">
    <citation type="journal article" date="2007" name="Microbiology">
        <title>Comparative analysis of the Corynebacterium glutamicum group and complete genome sequence of strain R.</title>
        <authorList>
            <person name="Yukawa H."/>
            <person name="Omumasaba C.A."/>
            <person name="Nonaka H."/>
            <person name="Kos P."/>
            <person name="Okai N."/>
            <person name="Suzuki N."/>
            <person name="Suda M."/>
            <person name="Tsuge Y."/>
            <person name="Watanabe J."/>
            <person name="Ikeda Y."/>
            <person name="Vertes A.A."/>
            <person name="Inui M."/>
        </authorList>
    </citation>
    <scope>NUCLEOTIDE SEQUENCE [LARGE SCALE GENOMIC DNA]</scope>
    <source>
        <strain>R</strain>
    </source>
</reference>
<protein>
    <recommendedName>
        <fullName evidence="1">Small ribosomal subunit protein uS9</fullName>
    </recommendedName>
    <alternativeName>
        <fullName evidence="2">30S ribosomal protein S9</fullName>
    </alternativeName>
</protein>
<gene>
    <name evidence="1" type="primary">rpsI</name>
    <name type="ordered locus">cgR_0700</name>
</gene>
<dbReference type="EMBL" id="AP009044">
    <property type="protein sequence ID" value="BAF53671.1"/>
    <property type="molecule type" value="Genomic_DNA"/>
</dbReference>
<dbReference type="RefSeq" id="WP_003854537.1">
    <property type="nucleotide sequence ID" value="NC_009342.1"/>
</dbReference>
<dbReference type="SMR" id="A4QBS4"/>
<dbReference type="GeneID" id="1018586"/>
<dbReference type="KEGG" id="cgt:cgR_0700"/>
<dbReference type="HOGENOM" id="CLU_046483_2_0_11"/>
<dbReference type="PhylomeDB" id="A4QBS4"/>
<dbReference type="Proteomes" id="UP000006698">
    <property type="component" value="Chromosome"/>
</dbReference>
<dbReference type="GO" id="GO:0005737">
    <property type="term" value="C:cytoplasm"/>
    <property type="evidence" value="ECO:0007669"/>
    <property type="project" value="UniProtKB-ARBA"/>
</dbReference>
<dbReference type="GO" id="GO:0015935">
    <property type="term" value="C:small ribosomal subunit"/>
    <property type="evidence" value="ECO:0007669"/>
    <property type="project" value="TreeGrafter"/>
</dbReference>
<dbReference type="GO" id="GO:0003723">
    <property type="term" value="F:RNA binding"/>
    <property type="evidence" value="ECO:0007669"/>
    <property type="project" value="TreeGrafter"/>
</dbReference>
<dbReference type="GO" id="GO:0003735">
    <property type="term" value="F:structural constituent of ribosome"/>
    <property type="evidence" value="ECO:0007669"/>
    <property type="project" value="InterPro"/>
</dbReference>
<dbReference type="GO" id="GO:0006412">
    <property type="term" value="P:translation"/>
    <property type="evidence" value="ECO:0007669"/>
    <property type="project" value="UniProtKB-UniRule"/>
</dbReference>
<dbReference type="FunFam" id="3.30.230.10:FF:000001">
    <property type="entry name" value="30S ribosomal protein S9"/>
    <property type="match status" value="1"/>
</dbReference>
<dbReference type="Gene3D" id="3.30.230.10">
    <property type="match status" value="1"/>
</dbReference>
<dbReference type="HAMAP" id="MF_00532_B">
    <property type="entry name" value="Ribosomal_uS9_B"/>
    <property type="match status" value="1"/>
</dbReference>
<dbReference type="InterPro" id="IPR020568">
    <property type="entry name" value="Ribosomal_Su5_D2-typ_SF"/>
</dbReference>
<dbReference type="InterPro" id="IPR000754">
    <property type="entry name" value="Ribosomal_uS9"/>
</dbReference>
<dbReference type="InterPro" id="IPR023035">
    <property type="entry name" value="Ribosomal_uS9_bac/plastid"/>
</dbReference>
<dbReference type="InterPro" id="IPR020574">
    <property type="entry name" value="Ribosomal_uS9_CS"/>
</dbReference>
<dbReference type="InterPro" id="IPR014721">
    <property type="entry name" value="Ribsml_uS5_D2-typ_fold_subgr"/>
</dbReference>
<dbReference type="NCBIfam" id="NF001099">
    <property type="entry name" value="PRK00132.1"/>
    <property type="match status" value="1"/>
</dbReference>
<dbReference type="PANTHER" id="PTHR21569">
    <property type="entry name" value="RIBOSOMAL PROTEIN S9"/>
    <property type="match status" value="1"/>
</dbReference>
<dbReference type="PANTHER" id="PTHR21569:SF1">
    <property type="entry name" value="SMALL RIBOSOMAL SUBUNIT PROTEIN US9M"/>
    <property type="match status" value="1"/>
</dbReference>
<dbReference type="Pfam" id="PF00380">
    <property type="entry name" value="Ribosomal_S9"/>
    <property type="match status" value="1"/>
</dbReference>
<dbReference type="SUPFAM" id="SSF54211">
    <property type="entry name" value="Ribosomal protein S5 domain 2-like"/>
    <property type="match status" value="1"/>
</dbReference>
<dbReference type="PROSITE" id="PS00360">
    <property type="entry name" value="RIBOSOMAL_S9"/>
    <property type="match status" value="1"/>
</dbReference>
<evidence type="ECO:0000255" key="1">
    <source>
        <dbReference type="HAMAP-Rule" id="MF_00532"/>
    </source>
</evidence>
<evidence type="ECO:0000305" key="2"/>
<sequence length="182" mass="19665">MSEPIQNENVESNVADAADIAAATAATEEFTNTIGDAIATASEEETIEAAPVVLDGPIQTVGRRKRAIVRVRLVAGSGEFKCNGRTLEEYFPNKLHQQLIKAPLVLLDRENQFDIVATLKGGGPTGQAGAFRLAIARALNAYNPAERGELKKAGFLTRDARAVERKKAGLHKARRAPQYSKR</sequence>
<keyword id="KW-0687">Ribonucleoprotein</keyword>
<keyword id="KW-0689">Ribosomal protein</keyword>
<comment type="similarity">
    <text evidence="1">Belongs to the universal ribosomal protein uS9 family.</text>
</comment>
<organism>
    <name type="scientific">Corynebacterium glutamicum (strain R)</name>
    <dbReference type="NCBI Taxonomy" id="340322"/>
    <lineage>
        <taxon>Bacteria</taxon>
        <taxon>Bacillati</taxon>
        <taxon>Actinomycetota</taxon>
        <taxon>Actinomycetes</taxon>
        <taxon>Mycobacteriales</taxon>
        <taxon>Corynebacteriaceae</taxon>
        <taxon>Corynebacterium</taxon>
    </lineage>
</organism>
<proteinExistence type="inferred from homology"/>
<feature type="chain" id="PRO_1000051213" description="Small ribosomal subunit protein uS9">
    <location>
        <begin position="1"/>
        <end position="182"/>
    </location>
</feature>